<protein>
    <recommendedName>
        <fullName evidence="1">GMP synthase [glutamine-hydrolyzing] subunit A</fullName>
        <ecNumber evidence="1">6.3.5.2</ecNumber>
    </recommendedName>
    <alternativeName>
        <fullName evidence="1">Glutamine amidotransferase</fullName>
    </alternativeName>
</protein>
<reference key="1">
    <citation type="journal article" date="2004" name="J. Bacteriol.">
        <title>Complete genome sequence of the genetically tractable hydrogenotrophic methanogen Methanococcus maripaludis.</title>
        <authorList>
            <person name="Hendrickson E.L."/>
            <person name="Kaul R."/>
            <person name="Zhou Y."/>
            <person name="Bovee D."/>
            <person name="Chapman P."/>
            <person name="Chung J."/>
            <person name="Conway de Macario E."/>
            <person name="Dodsworth J.A."/>
            <person name="Gillett W."/>
            <person name="Graham D.E."/>
            <person name="Hackett M."/>
            <person name="Haydock A.K."/>
            <person name="Kang A."/>
            <person name="Land M.L."/>
            <person name="Levy R."/>
            <person name="Lie T.J."/>
            <person name="Major T.A."/>
            <person name="Moore B.C."/>
            <person name="Porat I."/>
            <person name="Palmeiri A."/>
            <person name="Rouse G."/>
            <person name="Saenphimmachak C."/>
            <person name="Soell D."/>
            <person name="Van Dien S."/>
            <person name="Wang T."/>
            <person name="Whitman W.B."/>
            <person name="Xia Q."/>
            <person name="Zhang Y."/>
            <person name="Larimer F.W."/>
            <person name="Olson M.V."/>
            <person name="Leigh J.A."/>
        </authorList>
    </citation>
    <scope>NUCLEOTIDE SEQUENCE [LARGE SCALE GENOMIC DNA]</scope>
    <source>
        <strain>DSM 14266 / JCM 13030 / NBRC 101832 / S2 / LL</strain>
    </source>
</reference>
<name>GUAAA_METMP</name>
<evidence type="ECO:0000255" key="1">
    <source>
        <dbReference type="HAMAP-Rule" id="MF_01510"/>
    </source>
</evidence>
<feature type="chain" id="PRO_0000140224" description="GMP synthase [glutamine-hydrolyzing] subunit A">
    <location>
        <begin position="1"/>
        <end position="189"/>
    </location>
</feature>
<feature type="domain" description="Glutamine amidotransferase type-1" evidence="1">
    <location>
        <begin position="1"/>
        <end position="189"/>
    </location>
</feature>
<feature type="active site" description="Nucleophile" evidence="1">
    <location>
        <position position="76"/>
    </location>
</feature>
<feature type="active site" evidence="1">
    <location>
        <position position="163"/>
    </location>
</feature>
<feature type="active site" evidence="1">
    <location>
        <position position="165"/>
    </location>
</feature>
<keyword id="KW-0067">ATP-binding</keyword>
<keyword id="KW-0315">Glutamine amidotransferase</keyword>
<keyword id="KW-0332">GMP biosynthesis</keyword>
<keyword id="KW-0436">Ligase</keyword>
<keyword id="KW-0547">Nucleotide-binding</keyword>
<keyword id="KW-0658">Purine biosynthesis</keyword>
<keyword id="KW-1185">Reference proteome</keyword>
<comment type="function">
    <text evidence="1">Catalyzes the synthesis of GMP from XMP.</text>
</comment>
<comment type="catalytic activity">
    <reaction evidence="1">
        <text>XMP + L-glutamine + ATP + H2O = GMP + L-glutamate + AMP + diphosphate + 2 H(+)</text>
        <dbReference type="Rhea" id="RHEA:11680"/>
        <dbReference type="ChEBI" id="CHEBI:15377"/>
        <dbReference type="ChEBI" id="CHEBI:15378"/>
        <dbReference type="ChEBI" id="CHEBI:29985"/>
        <dbReference type="ChEBI" id="CHEBI:30616"/>
        <dbReference type="ChEBI" id="CHEBI:33019"/>
        <dbReference type="ChEBI" id="CHEBI:57464"/>
        <dbReference type="ChEBI" id="CHEBI:58115"/>
        <dbReference type="ChEBI" id="CHEBI:58359"/>
        <dbReference type="ChEBI" id="CHEBI:456215"/>
        <dbReference type="EC" id="6.3.5.2"/>
    </reaction>
</comment>
<comment type="pathway">
    <text evidence="1">Purine metabolism; GMP biosynthesis; GMP from XMP (L-Gln route): step 1/1.</text>
</comment>
<comment type="subunit">
    <text evidence="1">Heterodimer composed of a glutamine amidotransferase subunit (A) and a GMP-binding subunit (B).</text>
</comment>
<dbReference type="EC" id="6.3.5.2" evidence="1"/>
<dbReference type="EMBL" id="BX950229">
    <property type="protein sequence ID" value="CAF31001.1"/>
    <property type="molecule type" value="Genomic_DNA"/>
</dbReference>
<dbReference type="RefSeq" id="WP_011171389.1">
    <property type="nucleotide sequence ID" value="NC_005791.1"/>
</dbReference>
<dbReference type="SMR" id="Q6LXA7"/>
<dbReference type="STRING" id="267377.MMP1445"/>
<dbReference type="MEROPS" id="C26.A31"/>
<dbReference type="EnsemblBacteria" id="CAF31001">
    <property type="protein sequence ID" value="CAF31001"/>
    <property type="gene ID" value="MMP1445"/>
</dbReference>
<dbReference type="GeneID" id="2761339"/>
<dbReference type="KEGG" id="mmp:MMP1445"/>
<dbReference type="PATRIC" id="fig|267377.15.peg.1481"/>
<dbReference type="eggNOG" id="arCOG00087">
    <property type="taxonomic scope" value="Archaea"/>
</dbReference>
<dbReference type="HOGENOM" id="CLU_014340_1_4_2"/>
<dbReference type="OrthoDB" id="10772at2157"/>
<dbReference type="UniPathway" id="UPA00189">
    <property type="reaction ID" value="UER00296"/>
</dbReference>
<dbReference type="Proteomes" id="UP000000590">
    <property type="component" value="Chromosome"/>
</dbReference>
<dbReference type="GO" id="GO:0005829">
    <property type="term" value="C:cytosol"/>
    <property type="evidence" value="ECO:0007669"/>
    <property type="project" value="TreeGrafter"/>
</dbReference>
<dbReference type="GO" id="GO:0005524">
    <property type="term" value="F:ATP binding"/>
    <property type="evidence" value="ECO:0007669"/>
    <property type="project" value="UniProtKB-KW"/>
</dbReference>
<dbReference type="GO" id="GO:0003921">
    <property type="term" value="F:GMP synthase activity"/>
    <property type="evidence" value="ECO:0007669"/>
    <property type="project" value="TreeGrafter"/>
</dbReference>
<dbReference type="CDD" id="cd01742">
    <property type="entry name" value="GATase1_GMP_Synthase"/>
    <property type="match status" value="1"/>
</dbReference>
<dbReference type="FunFam" id="3.40.50.880:FF:000047">
    <property type="entry name" value="GMP synthase [glutamine-hydrolyzing] subunit A"/>
    <property type="match status" value="1"/>
</dbReference>
<dbReference type="Gene3D" id="3.40.50.880">
    <property type="match status" value="1"/>
</dbReference>
<dbReference type="HAMAP" id="MF_01510">
    <property type="entry name" value="GMP_synthase_A"/>
    <property type="match status" value="1"/>
</dbReference>
<dbReference type="InterPro" id="IPR029062">
    <property type="entry name" value="Class_I_gatase-like"/>
</dbReference>
<dbReference type="InterPro" id="IPR017926">
    <property type="entry name" value="GATASE"/>
</dbReference>
<dbReference type="InterPro" id="IPR004739">
    <property type="entry name" value="GMP_synth_GATase"/>
</dbReference>
<dbReference type="InterPro" id="IPR023686">
    <property type="entry name" value="GMP_synthase_A"/>
</dbReference>
<dbReference type="NCBIfam" id="TIGR00888">
    <property type="entry name" value="guaA_Nterm"/>
    <property type="match status" value="1"/>
</dbReference>
<dbReference type="NCBIfam" id="NF001975">
    <property type="entry name" value="PRK00758.1"/>
    <property type="match status" value="1"/>
</dbReference>
<dbReference type="PANTHER" id="PTHR11922:SF2">
    <property type="entry name" value="GMP SYNTHASE [GLUTAMINE-HYDROLYZING]"/>
    <property type="match status" value="1"/>
</dbReference>
<dbReference type="PANTHER" id="PTHR11922">
    <property type="entry name" value="GMP SYNTHASE-RELATED"/>
    <property type="match status" value="1"/>
</dbReference>
<dbReference type="Pfam" id="PF00117">
    <property type="entry name" value="GATase"/>
    <property type="match status" value="1"/>
</dbReference>
<dbReference type="PRINTS" id="PR00097">
    <property type="entry name" value="ANTSNTHASEII"/>
</dbReference>
<dbReference type="PRINTS" id="PR00096">
    <property type="entry name" value="GATASE"/>
</dbReference>
<dbReference type="SUPFAM" id="SSF52317">
    <property type="entry name" value="Class I glutamine amidotransferase-like"/>
    <property type="match status" value="1"/>
</dbReference>
<dbReference type="PROSITE" id="PS51273">
    <property type="entry name" value="GATASE_TYPE_1"/>
    <property type="match status" value="1"/>
</dbReference>
<proteinExistence type="inferred from homology"/>
<sequence length="189" mass="20884">MIVILNNGGQYVHRIQRSLKYLDVPAKIVPNSTTLEEIAANPEIKGVILSGGPDITKATNCENIALNSELPVLGICLGHQLISKAYGGEVSRADSEEYASIKIYVKQENDLFKGVPSEFTAWASHMDEVKVTPDCFEVLAYSDICGVESIKHKEKSIYGVQFHPEVSHTEYGDIILKNFCKKCGFGFEE</sequence>
<gene>
    <name evidence="1" type="primary">guaAA</name>
    <name type="synonym">guaA</name>
    <name type="ordered locus">MMP1445</name>
</gene>
<organism>
    <name type="scientific">Methanococcus maripaludis (strain DSM 14266 / JCM 13030 / NBRC 101832 / S2 / LL)</name>
    <dbReference type="NCBI Taxonomy" id="267377"/>
    <lineage>
        <taxon>Archaea</taxon>
        <taxon>Methanobacteriati</taxon>
        <taxon>Methanobacteriota</taxon>
        <taxon>Methanomada group</taxon>
        <taxon>Methanococci</taxon>
        <taxon>Methanococcales</taxon>
        <taxon>Methanococcaceae</taxon>
        <taxon>Methanococcus</taxon>
    </lineage>
</organism>
<accession>Q6LXA7</accession>